<sequence>MMADTLILASLSSYRAQLLKKAGLNFLIEGASFDEREIGKIEKVKTPKELSCFLASAKAKNVSDRFPDALVIGCDQVLDLEGQIFHKVTSKKEAYQRLCTLSGKTHSLHSAVALFRNGRKIWVEAFSAHMSVRPLSSKFIKRYLAYVGTDVLNSVGVYQIEGEGIHLFEKIDGDFFTIIGLPLLPLLVKLRHLGIICD</sequence>
<organism>
    <name type="scientific">Bartonella quintana (strain Toulouse)</name>
    <name type="common">Rochalimaea quintana</name>
    <dbReference type="NCBI Taxonomy" id="283165"/>
    <lineage>
        <taxon>Bacteria</taxon>
        <taxon>Pseudomonadati</taxon>
        <taxon>Pseudomonadota</taxon>
        <taxon>Alphaproteobacteria</taxon>
        <taxon>Hyphomicrobiales</taxon>
        <taxon>Bartonellaceae</taxon>
        <taxon>Bartonella</taxon>
    </lineage>
</organism>
<accession>Q6G1B6</accession>
<reference key="1">
    <citation type="journal article" date="2004" name="Proc. Natl. Acad. Sci. U.S.A.">
        <title>The louse-borne human pathogen Bartonella quintana is a genomic derivative of the zoonotic agent Bartonella henselae.</title>
        <authorList>
            <person name="Alsmark U.C.M."/>
            <person name="Frank A.C."/>
            <person name="Karlberg E.O."/>
            <person name="Legault B.-A."/>
            <person name="Ardell D.H."/>
            <person name="Canbaeck B."/>
            <person name="Eriksson A.-S."/>
            <person name="Naeslund A.K."/>
            <person name="Handley S.A."/>
            <person name="Huvet M."/>
            <person name="La Scola B."/>
            <person name="Holmberg M."/>
            <person name="Andersson S.G.E."/>
        </authorList>
    </citation>
    <scope>NUCLEOTIDE SEQUENCE [LARGE SCALE GENOMIC DNA]</scope>
    <source>
        <strain>Toulouse</strain>
    </source>
</reference>
<gene>
    <name type="ordered locus">BQ00020</name>
</gene>
<comment type="function">
    <text evidence="1">Nucleoside triphosphate pyrophosphatase that hydrolyzes 7-methyl-GTP (m(7)GTP). May have a dual role in cell division arrest and in preventing the incorporation of modified nucleotides into cellular nucleic acids.</text>
</comment>
<comment type="catalytic activity">
    <reaction evidence="1">
        <text>N(7)-methyl-GTP + H2O = N(7)-methyl-GMP + diphosphate + H(+)</text>
        <dbReference type="Rhea" id="RHEA:58744"/>
        <dbReference type="ChEBI" id="CHEBI:15377"/>
        <dbReference type="ChEBI" id="CHEBI:15378"/>
        <dbReference type="ChEBI" id="CHEBI:33019"/>
        <dbReference type="ChEBI" id="CHEBI:58285"/>
        <dbReference type="ChEBI" id="CHEBI:87133"/>
    </reaction>
</comment>
<comment type="cofactor">
    <cofactor evidence="1">
        <name>a divalent metal cation</name>
        <dbReference type="ChEBI" id="CHEBI:60240"/>
    </cofactor>
</comment>
<comment type="subcellular location">
    <subcellularLocation>
        <location evidence="1">Cytoplasm</location>
    </subcellularLocation>
</comment>
<comment type="similarity">
    <text evidence="1">Belongs to the Maf family. YceF subfamily.</text>
</comment>
<name>NTPPB_BARQU</name>
<dbReference type="EC" id="3.6.1.-" evidence="1"/>
<dbReference type="EMBL" id="BX897700">
    <property type="protein sequence ID" value="CAF25509.1"/>
    <property type="molecule type" value="Genomic_DNA"/>
</dbReference>
<dbReference type="RefSeq" id="WP_011178841.1">
    <property type="nucleotide sequence ID" value="NC_005955.1"/>
</dbReference>
<dbReference type="SMR" id="Q6G1B6"/>
<dbReference type="KEGG" id="bqu:BQ00020"/>
<dbReference type="eggNOG" id="COG0424">
    <property type="taxonomic scope" value="Bacteria"/>
</dbReference>
<dbReference type="HOGENOM" id="CLU_040416_1_1_5"/>
<dbReference type="OrthoDB" id="9813962at2"/>
<dbReference type="Proteomes" id="UP000000597">
    <property type="component" value="Chromosome"/>
</dbReference>
<dbReference type="GO" id="GO:0005737">
    <property type="term" value="C:cytoplasm"/>
    <property type="evidence" value="ECO:0007669"/>
    <property type="project" value="UniProtKB-SubCell"/>
</dbReference>
<dbReference type="GO" id="GO:0047429">
    <property type="term" value="F:nucleoside triphosphate diphosphatase activity"/>
    <property type="evidence" value="ECO:0007669"/>
    <property type="project" value="InterPro"/>
</dbReference>
<dbReference type="GO" id="GO:0009117">
    <property type="term" value="P:nucleotide metabolic process"/>
    <property type="evidence" value="ECO:0007669"/>
    <property type="project" value="UniProtKB-KW"/>
</dbReference>
<dbReference type="CDD" id="cd00555">
    <property type="entry name" value="Maf"/>
    <property type="match status" value="1"/>
</dbReference>
<dbReference type="Gene3D" id="3.90.950.10">
    <property type="match status" value="1"/>
</dbReference>
<dbReference type="HAMAP" id="MF_00528">
    <property type="entry name" value="Maf"/>
    <property type="match status" value="1"/>
</dbReference>
<dbReference type="InterPro" id="IPR029001">
    <property type="entry name" value="ITPase-like_fam"/>
</dbReference>
<dbReference type="InterPro" id="IPR003697">
    <property type="entry name" value="Maf-like"/>
</dbReference>
<dbReference type="NCBIfam" id="TIGR00172">
    <property type="entry name" value="maf"/>
    <property type="match status" value="1"/>
</dbReference>
<dbReference type="PANTHER" id="PTHR43213">
    <property type="entry name" value="BIFUNCTIONAL DTTP/UTP PYROPHOSPHATASE/METHYLTRANSFERASE PROTEIN-RELATED"/>
    <property type="match status" value="1"/>
</dbReference>
<dbReference type="PANTHER" id="PTHR43213:SF5">
    <property type="entry name" value="BIFUNCTIONAL DTTP_UTP PYROPHOSPHATASE_METHYLTRANSFERASE PROTEIN-RELATED"/>
    <property type="match status" value="1"/>
</dbReference>
<dbReference type="Pfam" id="PF02545">
    <property type="entry name" value="Maf"/>
    <property type="match status" value="1"/>
</dbReference>
<dbReference type="PIRSF" id="PIRSF006305">
    <property type="entry name" value="Maf"/>
    <property type="match status" value="1"/>
</dbReference>
<dbReference type="SUPFAM" id="SSF52972">
    <property type="entry name" value="ITPase-like"/>
    <property type="match status" value="1"/>
</dbReference>
<proteinExistence type="inferred from homology"/>
<keyword id="KW-0963">Cytoplasm</keyword>
<keyword id="KW-0378">Hydrolase</keyword>
<keyword id="KW-0546">Nucleotide metabolism</keyword>
<evidence type="ECO:0000255" key="1">
    <source>
        <dbReference type="HAMAP-Rule" id="MF_00528"/>
    </source>
</evidence>
<feature type="chain" id="PRO_0000267252" description="7-methyl-GTP pyrophosphatase">
    <location>
        <begin position="1"/>
        <end position="198"/>
    </location>
</feature>
<feature type="active site" description="Proton acceptor" evidence="1">
    <location>
        <position position="75"/>
    </location>
</feature>
<feature type="site" description="Important for substrate specificity" evidence="1">
    <location>
        <position position="14"/>
    </location>
</feature>
<feature type="site" description="Important for substrate specificity" evidence="1">
    <location>
        <position position="76"/>
    </location>
</feature>
<feature type="site" description="Important for substrate specificity" evidence="1">
    <location>
        <position position="161"/>
    </location>
</feature>
<protein>
    <recommendedName>
        <fullName evidence="1">7-methyl-GTP pyrophosphatase</fullName>
        <shortName evidence="1">m(7)GTP pyrophosphatase</shortName>
        <ecNumber evidence="1">3.6.1.-</ecNumber>
    </recommendedName>
</protein>